<reference key="1">
    <citation type="submission" date="2006-03" db="EMBL/GenBank/DDBJ databases">
        <title>Complete genome sequence of Gemmatimonas aurantiaca T-27 that represents a novel phylum Gemmatimonadetes.</title>
        <authorList>
            <person name="Takasaki K."/>
            <person name="Ichikawa N."/>
            <person name="Miura H."/>
            <person name="Matsushita S."/>
            <person name="Watanabe Y."/>
            <person name="Oguchi A."/>
            <person name="Ankai A."/>
            <person name="Yashiro I."/>
            <person name="Takahashi M."/>
            <person name="Terui Y."/>
            <person name="Fukui S."/>
            <person name="Yokoyama H."/>
            <person name="Tanikawa S."/>
            <person name="Hanada S."/>
            <person name="Kamagata Y."/>
            <person name="Fujita N."/>
        </authorList>
    </citation>
    <scope>NUCLEOTIDE SEQUENCE [LARGE SCALE GENOMIC DNA]</scope>
    <source>
        <strain>DSM 14586 / JCM 11422 / NBRC 100505 / T-27</strain>
    </source>
</reference>
<evidence type="ECO:0000255" key="1">
    <source>
        <dbReference type="HAMAP-Rule" id="MF_01007"/>
    </source>
</evidence>
<proteinExistence type="inferred from homology"/>
<comment type="function">
    <text evidence="1">Specifically methylates the N4 position of cytidine in position 1402 (C1402) of 16S rRNA.</text>
</comment>
<comment type="catalytic activity">
    <reaction evidence="1">
        <text>cytidine(1402) in 16S rRNA + S-adenosyl-L-methionine = N(4)-methylcytidine(1402) in 16S rRNA + S-adenosyl-L-homocysteine + H(+)</text>
        <dbReference type="Rhea" id="RHEA:42928"/>
        <dbReference type="Rhea" id="RHEA-COMP:10286"/>
        <dbReference type="Rhea" id="RHEA-COMP:10287"/>
        <dbReference type="ChEBI" id="CHEBI:15378"/>
        <dbReference type="ChEBI" id="CHEBI:57856"/>
        <dbReference type="ChEBI" id="CHEBI:59789"/>
        <dbReference type="ChEBI" id="CHEBI:74506"/>
        <dbReference type="ChEBI" id="CHEBI:82748"/>
        <dbReference type="EC" id="2.1.1.199"/>
    </reaction>
</comment>
<comment type="subcellular location">
    <subcellularLocation>
        <location evidence="1">Cytoplasm</location>
    </subcellularLocation>
</comment>
<comment type="similarity">
    <text evidence="1">Belongs to the methyltransferase superfamily. RsmH family.</text>
</comment>
<keyword id="KW-0963">Cytoplasm</keyword>
<keyword id="KW-0489">Methyltransferase</keyword>
<keyword id="KW-1185">Reference proteome</keyword>
<keyword id="KW-0698">rRNA processing</keyword>
<keyword id="KW-0949">S-adenosyl-L-methionine</keyword>
<keyword id="KW-0808">Transferase</keyword>
<protein>
    <recommendedName>
        <fullName evidence="1">Ribosomal RNA small subunit methyltransferase H</fullName>
        <ecNumber evidence="1">2.1.1.199</ecNumber>
    </recommendedName>
    <alternativeName>
        <fullName evidence="1">16S rRNA m(4)C1402 methyltransferase</fullName>
    </alternativeName>
    <alternativeName>
        <fullName evidence="1">rRNA (cytosine-N(4)-)-methyltransferase RsmH</fullName>
    </alternativeName>
</protein>
<dbReference type="EC" id="2.1.1.199" evidence="1"/>
<dbReference type="EMBL" id="AP009153">
    <property type="protein sequence ID" value="BAH38462.1"/>
    <property type="molecule type" value="Genomic_DNA"/>
</dbReference>
<dbReference type="RefSeq" id="WP_012682909.1">
    <property type="nucleotide sequence ID" value="NC_012489.1"/>
</dbReference>
<dbReference type="SMR" id="C1A8A2"/>
<dbReference type="STRING" id="379066.GAU_1420"/>
<dbReference type="KEGG" id="gau:GAU_1420"/>
<dbReference type="eggNOG" id="COG0275">
    <property type="taxonomic scope" value="Bacteria"/>
</dbReference>
<dbReference type="HOGENOM" id="CLU_038422_3_0_0"/>
<dbReference type="OrthoDB" id="9806637at2"/>
<dbReference type="Proteomes" id="UP000002209">
    <property type="component" value="Chromosome"/>
</dbReference>
<dbReference type="GO" id="GO:0005737">
    <property type="term" value="C:cytoplasm"/>
    <property type="evidence" value="ECO:0007669"/>
    <property type="project" value="UniProtKB-SubCell"/>
</dbReference>
<dbReference type="GO" id="GO:0071424">
    <property type="term" value="F:rRNA (cytosine-N4-)-methyltransferase activity"/>
    <property type="evidence" value="ECO:0007669"/>
    <property type="project" value="UniProtKB-UniRule"/>
</dbReference>
<dbReference type="GO" id="GO:0070475">
    <property type="term" value="P:rRNA base methylation"/>
    <property type="evidence" value="ECO:0007669"/>
    <property type="project" value="UniProtKB-UniRule"/>
</dbReference>
<dbReference type="CDD" id="cd02440">
    <property type="entry name" value="AdoMet_MTases"/>
    <property type="match status" value="1"/>
</dbReference>
<dbReference type="Gene3D" id="1.10.150.170">
    <property type="entry name" value="Putative methyltransferase TM0872, insert domain"/>
    <property type="match status" value="1"/>
</dbReference>
<dbReference type="Gene3D" id="3.40.50.150">
    <property type="entry name" value="Vaccinia Virus protein VP39"/>
    <property type="match status" value="1"/>
</dbReference>
<dbReference type="HAMAP" id="MF_01007">
    <property type="entry name" value="16SrRNA_methyltr_H"/>
    <property type="match status" value="1"/>
</dbReference>
<dbReference type="InterPro" id="IPR002903">
    <property type="entry name" value="RsmH"/>
</dbReference>
<dbReference type="InterPro" id="IPR023397">
    <property type="entry name" value="SAM-dep_MeTrfase_MraW_recog"/>
</dbReference>
<dbReference type="InterPro" id="IPR029063">
    <property type="entry name" value="SAM-dependent_MTases_sf"/>
</dbReference>
<dbReference type="NCBIfam" id="TIGR00006">
    <property type="entry name" value="16S rRNA (cytosine(1402)-N(4))-methyltransferase RsmH"/>
    <property type="match status" value="1"/>
</dbReference>
<dbReference type="PANTHER" id="PTHR11265:SF0">
    <property type="entry name" value="12S RRNA N4-METHYLCYTIDINE METHYLTRANSFERASE"/>
    <property type="match status" value="1"/>
</dbReference>
<dbReference type="PANTHER" id="PTHR11265">
    <property type="entry name" value="S-ADENOSYL-METHYLTRANSFERASE MRAW"/>
    <property type="match status" value="1"/>
</dbReference>
<dbReference type="Pfam" id="PF01795">
    <property type="entry name" value="Methyltransf_5"/>
    <property type="match status" value="1"/>
</dbReference>
<dbReference type="PIRSF" id="PIRSF004486">
    <property type="entry name" value="MraW"/>
    <property type="match status" value="1"/>
</dbReference>
<dbReference type="SUPFAM" id="SSF81799">
    <property type="entry name" value="Putative methyltransferase TM0872, insert domain"/>
    <property type="match status" value="1"/>
</dbReference>
<dbReference type="SUPFAM" id="SSF53335">
    <property type="entry name" value="S-adenosyl-L-methionine-dependent methyltransferases"/>
    <property type="match status" value="1"/>
</dbReference>
<organism>
    <name type="scientific">Gemmatimonas aurantiaca (strain DSM 14586 / JCM 11422 / NBRC 100505 / T-27)</name>
    <dbReference type="NCBI Taxonomy" id="379066"/>
    <lineage>
        <taxon>Bacteria</taxon>
        <taxon>Pseudomonadati</taxon>
        <taxon>Gemmatimonadota</taxon>
        <taxon>Gemmatimonadia</taxon>
        <taxon>Gemmatimonadales</taxon>
        <taxon>Gemmatimonadaceae</taxon>
        <taxon>Gemmatimonas</taxon>
    </lineage>
</organism>
<name>RSMH_GEMAT</name>
<gene>
    <name evidence="1" type="primary">rsmH</name>
    <name type="synonym">mraW</name>
    <name type="ordered locus">GAU_1420</name>
</gene>
<sequence>MTPVRSAPSGRTGTYHVPVLLSEIETMLANATTVLDCTLGGGGHTAAFLERGVRVTGVDRDPRALAAARERLGEYERSGQFRAVLANYAALEEAGFSTDDRFDGILLDLGVSSHQFDDASRGFTFREGAPLDMRMGTDADLDAGELLNTIDEVDLSALLRAYADEPRAARMAREIVRRRERRPFATADDLVDAIRAVLGPRSGAPDFARIFQAVRIAVNDELSGLERALPALRDRLTPGGVLAIISYHSGEDRLVKNAFRDWSASCVCPPRQFVCTCRGRPLGDTITRKPVSATEQEIDQNTRARSARLRAWRSA</sequence>
<accession>C1A8A2</accession>
<feature type="chain" id="PRO_0000386906" description="Ribosomal RNA small subunit methyltransferase H">
    <location>
        <begin position="1"/>
        <end position="315"/>
    </location>
</feature>
<feature type="binding site" evidence="1">
    <location>
        <begin position="42"/>
        <end position="44"/>
    </location>
    <ligand>
        <name>S-adenosyl-L-methionine</name>
        <dbReference type="ChEBI" id="CHEBI:59789"/>
    </ligand>
</feature>
<feature type="binding site" evidence="1">
    <location>
        <position position="59"/>
    </location>
    <ligand>
        <name>S-adenosyl-L-methionine</name>
        <dbReference type="ChEBI" id="CHEBI:59789"/>
    </ligand>
</feature>
<feature type="binding site" evidence="1">
    <location>
        <position position="96"/>
    </location>
    <ligand>
        <name>S-adenosyl-L-methionine</name>
        <dbReference type="ChEBI" id="CHEBI:59789"/>
    </ligand>
</feature>
<feature type="binding site" evidence="1">
    <location>
        <position position="108"/>
    </location>
    <ligand>
        <name>S-adenosyl-L-methionine</name>
        <dbReference type="ChEBI" id="CHEBI:59789"/>
    </ligand>
</feature>
<feature type="binding site" evidence="1">
    <location>
        <position position="115"/>
    </location>
    <ligand>
        <name>S-adenosyl-L-methionine</name>
        <dbReference type="ChEBI" id="CHEBI:59789"/>
    </ligand>
</feature>